<keyword id="KW-0007">Acetylation</keyword>
<keyword id="KW-0539">Nucleus</keyword>
<keyword id="KW-0597">Phosphoprotein</keyword>
<accession>A7A241</accession>
<comment type="function">
    <text evidence="1">Regulator of type 1 phosphatases which maintains protein phosphatase activity under strict control. Regulates the nuclear localization of type 1 phosphatase GLC7 and SDS22, and is involved in the regulation of mRNA 3'-end processing. May also regulate the activity of type 1 phosphatase PPZ1 (By similarity).</text>
</comment>
<comment type="subunit">
    <text evidence="1">Interacts with GLC7, PPZ1 and SDS22.</text>
</comment>
<comment type="subcellular location">
    <subcellularLocation>
        <location evidence="1">Nucleus</location>
    </subcellularLocation>
</comment>
<comment type="similarity">
    <text evidence="4">Belongs to the YPI1 family.</text>
</comment>
<proteinExistence type="inferred from homology"/>
<reference key="1">
    <citation type="journal article" date="2007" name="Proc. Natl. Acad. Sci. U.S.A.">
        <title>Genome sequencing and comparative analysis of Saccharomyces cerevisiae strain YJM789.</title>
        <authorList>
            <person name="Wei W."/>
            <person name="McCusker J.H."/>
            <person name="Hyman R.W."/>
            <person name="Jones T."/>
            <person name="Ning Y."/>
            <person name="Cao Z."/>
            <person name="Gu Z."/>
            <person name="Bruno D."/>
            <person name="Miranda M."/>
            <person name="Nguyen M."/>
            <person name="Wilhelmy J."/>
            <person name="Komp C."/>
            <person name="Tamse R."/>
            <person name="Wang X."/>
            <person name="Jia P."/>
            <person name="Luedi P."/>
            <person name="Oefner P.J."/>
            <person name="David L."/>
            <person name="Dietrich F.S."/>
            <person name="Li Y."/>
            <person name="Davis R.W."/>
            <person name="Steinmetz L.M."/>
        </authorList>
    </citation>
    <scope>NUCLEOTIDE SEQUENCE [LARGE SCALE GENOMIC DNA]</scope>
    <source>
        <strain>YJM789</strain>
    </source>
</reference>
<gene>
    <name type="primary">YPI1</name>
    <name type="ORF">SCY_1751</name>
</gene>
<dbReference type="EMBL" id="AAFW02000176">
    <property type="protein sequence ID" value="EDN59152.1"/>
    <property type="molecule type" value="Genomic_DNA"/>
</dbReference>
<dbReference type="SMR" id="A7A241"/>
<dbReference type="HOGENOM" id="CLU_098333_3_0_1"/>
<dbReference type="Proteomes" id="UP000007060">
    <property type="component" value="Unassembled WGS sequence"/>
</dbReference>
<dbReference type="GO" id="GO:0005634">
    <property type="term" value="C:nucleus"/>
    <property type="evidence" value="ECO:0007669"/>
    <property type="project" value="UniProtKB-SubCell"/>
</dbReference>
<dbReference type="GO" id="GO:0008157">
    <property type="term" value="F:protein phosphatase 1 binding"/>
    <property type="evidence" value="ECO:0007669"/>
    <property type="project" value="TreeGrafter"/>
</dbReference>
<dbReference type="GO" id="GO:0004865">
    <property type="term" value="F:protein serine/threonine phosphatase inhibitor activity"/>
    <property type="evidence" value="ECO:0007669"/>
    <property type="project" value="InterPro"/>
</dbReference>
<dbReference type="InterPro" id="IPR011107">
    <property type="entry name" value="PPI_Ypi1"/>
</dbReference>
<dbReference type="PANTHER" id="PTHR20835:SF0">
    <property type="entry name" value="E3 UBIQUITIN-PROTEIN LIGASE PPP1R11"/>
    <property type="match status" value="1"/>
</dbReference>
<dbReference type="PANTHER" id="PTHR20835">
    <property type="entry name" value="E3 UBIQUITIN-PROTEIN LIGASE PPP1R11-RELATED"/>
    <property type="match status" value="1"/>
</dbReference>
<dbReference type="Pfam" id="PF07491">
    <property type="entry name" value="PPI_Ypi1"/>
    <property type="match status" value="1"/>
</dbReference>
<organism>
    <name type="scientific">Saccharomyces cerevisiae (strain YJM789)</name>
    <name type="common">Baker's yeast</name>
    <dbReference type="NCBI Taxonomy" id="307796"/>
    <lineage>
        <taxon>Eukaryota</taxon>
        <taxon>Fungi</taxon>
        <taxon>Dikarya</taxon>
        <taxon>Ascomycota</taxon>
        <taxon>Saccharomycotina</taxon>
        <taxon>Saccharomycetes</taxon>
        <taxon>Saccharomycetales</taxon>
        <taxon>Saccharomycetaceae</taxon>
        <taxon>Saccharomyces</taxon>
    </lineage>
</organism>
<evidence type="ECO:0000250" key="1"/>
<evidence type="ECO:0000250" key="2">
    <source>
        <dbReference type="UniProtKB" id="P43587"/>
    </source>
</evidence>
<evidence type="ECO:0000256" key="3">
    <source>
        <dbReference type="SAM" id="MobiDB-lite"/>
    </source>
</evidence>
<evidence type="ECO:0000305" key="4"/>
<feature type="initiator methionine" description="Removed" evidence="2">
    <location>
        <position position="1"/>
    </location>
</feature>
<feature type="chain" id="PRO_0000333484" description="Type 1 phosphatases regulator YPI1">
    <location>
        <begin position="2"/>
        <end position="155"/>
    </location>
</feature>
<feature type="region of interest" description="Disordered" evidence="3">
    <location>
        <begin position="1"/>
        <end position="56"/>
    </location>
</feature>
<feature type="region of interest" description="Disordered" evidence="3">
    <location>
        <begin position="79"/>
        <end position="155"/>
    </location>
</feature>
<feature type="short sequence motif" description="GLC7-binding">
    <location>
        <begin position="51"/>
        <end position="53"/>
    </location>
</feature>
<feature type="compositionally biased region" description="Polar residues" evidence="3">
    <location>
        <begin position="1"/>
        <end position="21"/>
    </location>
</feature>
<feature type="compositionally biased region" description="Low complexity" evidence="3">
    <location>
        <begin position="93"/>
        <end position="102"/>
    </location>
</feature>
<feature type="compositionally biased region" description="Basic and acidic residues" evidence="3">
    <location>
        <begin position="104"/>
        <end position="114"/>
    </location>
</feature>
<feature type="compositionally biased region" description="Basic residues" evidence="3">
    <location>
        <begin position="115"/>
        <end position="128"/>
    </location>
</feature>
<feature type="compositionally biased region" description="Basic and acidic residues" evidence="3">
    <location>
        <begin position="144"/>
        <end position="155"/>
    </location>
</feature>
<feature type="modified residue" description="N-acetylserine" evidence="2">
    <location>
        <position position="2"/>
    </location>
</feature>
<feature type="modified residue" description="Phosphoserine" evidence="2">
    <location>
        <position position="22"/>
    </location>
</feature>
<feature type="modified residue" description="Phosphoserine" evidence="2">
    <location>
        <position position="133"/>
    </location>
</feature>
<name>YPI1_YEAS7</name>
<protein>
    <recommendedName>
        <fullName>Type 1 phosphatases regulator YPI1</fullName>
    </recommendedName>
</protein>
<sequence>MSGNQMAMGSEQQQTVGSRTVSVEEVPAVLQLRATQDPPRSQEAMPTRHNVRWEENVIDNENMNKKKTKICCIFHPQNEDEEECNHHSDDDGSSSSGSSSSESENEKDLDFNERRQRRLERRHRKLEKKRSYSPNAYEIQPDYSEYRRKQQEKKD</sequence>